<comment type="function">
    <text evidence="2 3">Catalyzes the rearrangement of hydroxylaminobenzene to 2-aminophenol.</text>
</comment>
<comment type="catalytic activity">
    <reaction evidence="2 3">
        <text>N-phenylhydroxylamine = 2-aminophenol</text>
        <dbReference type="Rhea" id="RHEA:19245"/>
        <dbReference type="ChEBI" id="CHEBI:18112"/>
        <dbReference type="ChEBI" id="CHEBI:28902"/>
        <dbReference type="EC" id="5.4.4.1"/>
    </reaction>
</comment>
<comment type="activity regulation">
    <text evidence="2">Addition of ZnSO(4) decreases the activity to 70%.</text>
</comment>
<comment type="biophysicochemical properties">
    <kinetics>
        <KM evidence="2">0.15 mM for hydroxylaminobenzene (at pH 7)</KM>
    </kinetics>
</comment>
<comment type="subcellular location">
    <subcellularLocation>
        <location evidence="4">Cell membrane</location>
        <topology evidence="4">Multi-pass membrane protein</topology>
    </subcellularLocation>
    <text evidence="3">Could be membrane-associated.</text>
</comment>
<comment type="disruption phenotype">
    <text evidence="3">Mutants can still grow on nitrobenzene.</text>
</comment>
<comment type="miscellaneous">
    <text evidence="5">Not expressed in strain JS45 under standard conditions, but is functional when expressed in E.coli.</text>
</comment>
<protein>
    <recommendedName>
        <fullName>Hydroxylaminobenzene mutase HabB</fullName>
        <shortName>HAB mutase</shortName>
        <ecNumber>5.4.4.1</ecNumber>
    </recommendedName>
    <alternativeName>
        <fullName>(Hydroxyamino)benzene mutase</fullName>
    </alternativeName>
</protein>
<dbReference type="EC" id="5.4.4.1"/>
<dbReference type="EMBL" id="AF028594">
    <property type="protein sequence ID" value="AAB94123.1"/>
    <property type="molecule type" value="Genomic_DNA"/>
</dbReference>
<dbReference type="SMR" id="O52216"/>
<dbReference type="KEGG" id="ag:AAB94123"/>
<dbReference type="GO" id="GO:0005886">
    <property type="term" value="C:plasma membrane"/>
    <property type="evidence" value="ECO:0007669"/>
    <property type="project" value="UniProtKB-SubCell"/>
</dbReference>
<dbReference type="GO" id="GO:0018824">
    <property type="term" value="F:(hydroxyamino)benzene mutase activity"/>
    <property type="evidence" value="ECO:0007669"/>
    <property type="project" value="RHEA"/>
</dbReference>
<feature type="chain" id="PRO_0000418543" description="Hydroxylaminobenzene mutase HabB">
    <location>
        <begin position="1"/>
        <end position="164"/>
    </location>
</feature>
<feature type="transmembrane region" description="Helical" evidence="1">
    <location>
        <begin position="16"/>
        <end position="36"/>
    </location>
</feature>
<feature type="transmembrane region" description="Helical" evidence="1">
    <location>
        <begin position="50"/>
        <end position="70"/>
    </location>
</feature>
<feature type="transmembrane region" description="Helical" evidence="1">
    <location>
        <begin position="78"/>
        <end position="98"/>
    </location>
</feature>
<feature type="transmembrane region" description="Helical" evidence="1">
    <location>
        <begin position="121"/>
        <end position="141"/>
    </location>
</feature>
<reference key="1">
    <citation type="journal article" date="2000" name="Appl. Environ. Microbiol.">
        <title>Sequence analysis and initial characterization of two isozymes of hydroxylaminobenzene mutase from Pseudomonas pseudoalcaligenes JS45.</title>
        <authorList>
            <person name="Davis J.K."/>
            <person name="Paoli G.C."/>
            <person name="He Z."/>
            <person name="Nadeau L.J."/>
            <person name="Somerville C.C."/>
            <person name="Spain J.C."/>
        </authorList>
    </citation>
    <scope>NUCLEOTIDE SEQUENCE [GENOMIC DNA]</scope>
    <scope>FUNCTION</scope>
    <scope>CATALYTIC ACTIVITY</scope>
    <scope>SUBCELLULAR LOCATION</scope>
    <scope>DISRUPTION PHENOTYPE</scope>
    <source>
        <strain>JS45</strain>
    </source>
</reference>
<reference key="2">
    <citation type="journal article" date="2000" name="Eur. J. Biochem.">
        <title>Characterization of hydroxylaminobenzene mutase from pNBZ139 cloned from Pseudomonas pseudoalcaligenes JS45. A highly associated SDS-stable enzyme catalyzing an intramolecular transfer of hydroxy groups.</title>
        <authorList>
            <person name="He Z."/>
            <person name="Nadeau L.J."/>
            <person name="Spain J.C."/>
        </authorList>
    </citation>
    <scope>FUNCTION</scope>
    <scope>CATALYTIC ACTIVITY</scope>
    <scope>ACTIVITY REGULATION</scope>
    <scope>BIOPHYSICOCHEMICAL PROPERTIES</scope>
    <source>
        <strain>JS45</strain>
    </source>
</reference>
<organism>
    <name type="scientific">Ectopseudomonas oleovorans</name>
    <name type="common">Pseudomonas oleovorans</name>
    <dbReference type="NCBI Taxonomy" id="301"/>
    <lineage>
        <taxon>Bacteria</taxon>
        <taxon>Pseudomonadati</taxon>
        <taxon>Pseudomonadota</taxon>
        <taxon>Gammaproteobacteria</taxon>
        <taxon>Pseudomonadales</taxon>
        <taxon>Pseudomonadaceae</taxon>
        <taxon>Ectopseudomonas</taxon>
    </lineage>
</organism>
<name>HABB_ECTOL</name>
<evidence type="ECO:0000255" key="1"/>
<evidence type="ECO:0000269" key="2">
    <source>
    </source>
</evidence>
<evidence type="ECO:0000269" key="3">
    <source>
    </source>
</evidence>
<evidence type="ECO:0000305" key="4"/>
<evidence type="ECO:0000305" key="5">
    <source>
    </source>
</evidence>
<proteinExistence type="evidence at protein level"/>
<sequence>MTLHTPSTDAPLARRLLQLGIALFLLGLLTGFLLPMMANPRVGLSSHLEGVLNGMFLLALGLMWPQLSLGTGARKAAFGFAVYGTYANWLATLLAGFWGAGGRMMPIAAGGHTGTAAQEGLIAFALISLSLSMLVVCALALWGLRSAPARRNTDAPAAGPQPAA</sequence>
<accession>O52216</accession>
<gene>
    <name type="primary">habB</name>
</gene>
<keyword id="KW-1003">Cell membrane</keyword>
<keyword id="KW-0413">Isomerase</keyword>
<keyword id="KW-0472">Membrane</keyword>
<keyword id="KW-0812">Transmembrane</keyword>
<keyword id="KW-1133">Transmembrane helix</keyword>